<gene>
    <name evidence="1" type="primary">nadA</name>
    <name type="ordered locus">Bcen_1895</name>
</gene>
<proteinExistence type="inferred from homology"/>
<accession>Q1BUA7</accession>
<sequence length="378" mass="40752">MQSTIKPVEYDRPVAAGTVCGVGQAWAKVPDAPSAEERAALKARIKALLAREKAVLVAHYYVDAELQELADETGGCVADSLEMARFGRDHDAQTLIVAGVRFMGETAKILSPNKRILMPDLDATCSLDLGCPVDEFSAFCDAHPDRTVVVYANTSAAVKARADWMVTSSIGLEIVADLHARGEKIIWAPDRHLGSYIQKKTGADMLLWQGSCLVHDEFKGIELDLLRAEYPDAKVLVHPESPENVVAQADVVGSTTQLIDAAVKFDAKRFIVATDLGILHKMQLAAPGKTFIAAPTAGNSATCKSCAHCPWMAMNGLANLADVLERGHNEIFVDPAIGERARLPIDRMLEFAAAHKKRVQASGDLQRDQSLFANVGAA</sequence>
<evidence type="ECO:0000255" key="1">
    <source>
        <dbReference type="HAMAP-Rule" id="MF_00567"/>
    </source>
</evidence>
<dbReference type="EC" id="2.5.1.72" evidence="1"/>
<dbReference type="EMBL" id="CP000378">
    <property type="protein sequence ID" value="ABF76798.1"/>
    <property type="molecule type" value="Genomic_DNA"/>
</dbReference>
<dbReference type="SMR" id="Q1BUA7"/>
<dbReference type="HOGENOM" id="CLU_047382_1_0_4"/>
<dbReference type="UniPathway" id="UPA00253">
    <property type="reaction ID" value="UER00327"/>
</dbReference>
<dbReference type="GO" id="GO:0005829">
    <property type="term" value="C:cytosol"/>
    <property type="evidence" value="ECO:0007669"/>
    <property type="project" value="TreeGrafter"/>
</dbReference>
<dbReference type="GO" id="GO:0051539">
    <property type="term" value="F:4 iron, 4 sulfur cluster binding"/>
    <property type="evidence" value="ECO:0007669"/>
    <property type="project" value="UniProtKB-KW"/>
</dbReference>
<dbReference type="GO" id="GO:0046872">
    <property type="term" value="F:metal ion binding"/>
    <property type="evidence" value="ECO:0007669"/>
    <property type="project" value="UniProtKB-KW"/>
</dbReference>
<dbReference type="GO" id="GO:0008987">
    <property type="term" value="F:quinolinate synthetase A activity"/>
    <property type="evidence" value="ECO:0007669"/>
    <property type="project" value="UniProtKB-UniRule"/>
</dbReference>
<dbReference type="GO" id="GO:0034628">
    <property type="term" value="P:'de novo' NAD biosynthetic process from L-aspartate"/>
    <property type="evidence" value="ECO:0007669"/>
    <property type="project" value="TreeGrafter"/>
</dbReference>
<dbReference type="FunFam" id="3.40.50.10800:FF:000001">
    <property type="entry name" value="Quinolinate synthase A"/>
    <property type="match status" value="1"/>
</dbReference>
<dbReference type="FunFam" id="3.40.50.10800:FF:000003">
    <property type="entry name" value="Quinolinate synthase A"/>
    <property type="match status" value="1"/>
</dbReference>
<dbReference type="Gene3D" id="3.40.50.10800">
    <property type="entry name" value="NadA-like"/>
    <property type="match status" value="3"/>
</dbReference>
<dbReference type="HAMAP" id="MF_00567">
    <property type="entry name" value="NadA_type1"/>
    <property type="match status" value="1"/>
</dbReference>
<dbReference type="InterPro" id="IPR003473">
    <property type="entry name" value="NadA"/>
</dbReference>
<dbReference type="InterPro" id="IPR036094">
    <property type="entry name" value="NadA_sf"/>
</dbReference>
<dbReference type="InterPro" id="IPR023513">
    <property type="entry name" value="Quinolinate_synth_A_type1"/>
</dbReference>
<dbReference type="NCBIfam" id="TIGR00550">
    <property type="entry name" value="nadA"/>
    <property type="match status" value="1"/>
</dbReference>
<dbReference type="NCBIfam" id="NF006877">
    <property type="entry name" value="PRK09375.1-1"/>
    <property type="match status" value="1"/>
</dbReference>
<dbReference type="NCBIfam" id="NF006878">
    <property type="entry name" value="PRK09375.1-2"/>
    <property type="match status" value="1"/>
</dbReference>
<dbReference type="PANTHER" id="PTHR30573:SF0">
    <property type="entry name" value="QUINOLINATE SYNTHASE, CHLOROPLASTIC"/>
    <property type="match status" value="1"/>
</dbReference>
<dbReference type="PANTHER" id="PTHR30573">
    <property type="entry name" value="QUINOLINATE SYNTHETASE A"/>
    <property type="match status" value="1"/>
</dbReference>
<dbReference type="Pfam" id="PF02445">
    <property type="entry name" value="NadA"/>
    <property type="match status" value="1"/>
</dbReference>
<dbReference type="SUPFAM" id="SSF142754">
    <property type="entry name" value="NadA-like"/>
    <property type="match status" value="1"/>
</dbReference>
<reference key="1">
    <citation type="submission" date="2006-05" db="EMBL/GenBank/DDBJ databases">
        <title>Complete sequence of chromosome 1 of Burkholderia cenocepacia AU 1054.</title>
        <authorList>
            <consortium name="US DOE Joint Genome Institute"/>
            <person name="Copeland A."/>
            <person name="Lucas S."/>
            <person name="Lapidus A."/>
            <person name="Barry K."/>
            <person name="Detter J.C."/>
            <person name="Glavina del Rio T."/>
            <person name="Hammon N."/>
            <person name="Israni S."/>
            <person name="Dalin E."/>
            <person name="Tice H."/>
            <person name="Pitluck S."/>
            <person name="Chain P."/>
            <person name="Malfatti S."/>
            <person name="Shin M."/>
            <person name="Vergez L."/>
            <person name="Schmutz J."/>
            <person name="Larimer F."/>
            <person name="Land M."/>
            <person name="Hauser L."/>
            <person name="Kyrpides N."/>
            <person name="Lykidis A."/>
            <person name="LiPuma J.J."/>
            <person name="Konstantinidis K."/>
            <person name="Tiedje J.M."/>
            <person name="Richardson P."/>
        </authorList>
    </citation>
    <scope>NUCLEOTIDE SEQUENCE [LARGE SCALE GENOMIC DNA]</scope>
    <source>
        <strain>AU 1054</strain>
    </source>
</reference>
<comment type="function">
    <text evidence="1">Catalyzes the condensation of iminoaspartate with dihydroxyacetone phosphate to form quinolinate.</text>
</comment>
<comment type="catalytic activity">
    <reaction evidence="1">
        <text>iminosuccinate + dihydroxyacetone phosphate = quinolinate + phosphate + 2 H2O + H(+)</text>
        <dbReference type="Rhea" id="RHEA:25888"/>
        <dbReference type="ChEBI" id="CHEBI:15377"/>
        <dbReference type="ChEBI" id="CHEBI:15378"/>
        <dbReference type="ChEBI" id="CHEBI:29959"/>
        <dbReference type="ChEBI" id="CHEBI:43474"/>
        <dbReference type="ChEBI" id="CHEBI:57642"/>
        <dbReference type="ChEBI" id="CHEBI:77875"/>
        <dbReference type="EC" id="2.5.1.72"/>
    </reaction>
    <physiologicalReaction direction="left-to-right" evidence="1">
        <dbReference type="Rhea" id="RHEA:25889"/>
    </physiologicalReaction>
</comment>
<comment type="cofactor">
    <cofactor evidence="1">
        <name>[4Fe-4S] cluster</name>
        <dbReference type="ChEBI" id="CHEBI:49883"/>
    </cofactor>
    <text evidence="1">Binds 1 [4Fe-4S] cluster per subunit.</text>
</comment>
<comment type="pathway">
    <text evidence="1">Cofactor biosynthesis; NAD(+) biosynthesis; quinolinate from iminoaspartate: step 1/1.</text>
</comment>
<comment type="subcellular location">
    <subcellularLocation>
        <location evidence="1">Cytoplasm</location>
    </subcellularLocation>
</comment>
<comment type="similarity">
    <text evidence="1">Belongs to the quinolinate synthase family. Type 1 subfamily.</text>
</comment>
<keyword id="KW-0004">4Fe-4S</keyword>
<keyword id="KW-0963">Cytoplasm</keyword>
<keyword id="KW-0408">Iron</keyword>
<keyword id="KW-0411">Iron-sulfur</keyword>
<keyword id="KW-0479">Metal-binding</keyword>
<keyword id="KW-0662">Pyridine nucleotide biosynthesis</keyword>
<keyword id="KW-0808">Transferase</keyword>
<feature type="chain" id="PRO_1000024941" description="Quinolinate synthase">
    <location>
        <begin position="1"/>
        <end position="378"/>
    </location>
</feature>
<feature type="binding site" evidence="1">
    <location>
        <position position="59"/>
    </location>
    <ligand>
        <name>iminosuccinate</name>
        <dbReference type="ChEBI" id="CHEBI:77875"/>
    </ligand>
</feature>
<feature type="binding site" evidence="1">
    <location>
        <position position="80"/>
    </location>
    <ligand>
        <name>iminosuccinate</name>
        <dbReference type="ChEBI" id="CHEBI:77875"/>
    </ligand>
</feature>
<feature type="binding site" evidence="1">
    <location>
        <position position="125"/>
    </location>
    <ligand>
        <name>[4Fe-4S] cluster</name>
        <dbReference type="ChEBI" id="CHEBI:49883"/>
    </ligand>
</feature>
<feature type="binding site" evidence="1">
    <location>
        <begin position="151"/>
        <end position="153"/>
    </location>
    <ligand>
        <name>iminosuccinate</name>
        <dbReference type="ChEBI" id="CHEBI:77875"/>
    </ligand>
</feature>
<feature type="binding site" evidence="1">
    <location>
        <position position="168"/>
    </location>
    <ligand>
        <name>iminosuccinate</name>
        <dbReference type="ChEBI" id="CHEBI:77875"/>
    </ligand>
</feature>
<feature type="binding site" evidence="1">
    <location>
        <position position="212"/>
    </location>
    <ligand>
        <name>[4Fe-4S] cluster</name>
        <dbReference type="ChEBI" id="CHEBI:49883"/>
    </ligand>
</feature>
<feature type="binding site" evidence="1">
    <location>
        <begin position="238"/>
        <end position="240"/>
    </location>
    <ligand>
        <name>iminosuccinate</name>
        <dbReference type="ChEBI" id="CHEBI:77875"/>
    </ligand>
</feature>
<feature type="binding site" evidence="1">
    <location>
        <position position="255"/>
    </location>
    <ligand>
        <name>iminosuccinate</name>
        <dbReference type="ChEBI" id="CHEBI:77875"/>
    </ligand>
</feature>
<feature type="binding site" evidence="1">
    <location>
        <position position="309"/>
    </location>
    <ligand>
        <name>[4Fe-4S] cluster</name>
        <dbReference type="ChEBI" id="CHEBI:49883"/>
    </ligand>
</feature>
<protein>
    <recommendedName>
        <fullName evidence="1">Quinolinate synthase</fullName>
        <ecNumber evidence="1">2.5.1.72</ecNumber>
    </recommendedName>
</protein>
<name>NADA_BURO1</name>
<organism>
    <name type="scientific">Burkholderia orbicola (strain AU 1054)</name>
    <dbReference type="NCBI Taxonomy" id="331271"/>
    <lineage>
        <taxon>Bacteria</taxon>
        <taxon>Pseudomonadati</taxon>
        <taxon>Pseudomonadota</taxon>
        <taxon>Betaproteobacteria</taxon>
        <taxon>Burkholderiales</taxon>
        <taxon>Burkholderiaceae</taxon>
        <taxon>Burkholderia</taxon>
        <taxon>Burkholderia cepacia complex</taxon>
        <taxon>Burkholderia orbicola</taxon>
    </lineage>
</organism>